<proteinExistence type="evidence at protein level"/>
<organism>
    <name type="scientific">Homo sapiens</name>
    <name type="common">Human</name>
    <dbReference type="NCBI Taxonomy" id="9606"/>
    <lineage>
        <taxon>Eukaryota</taxon>
        <taxon>Metazoa</taxon>
        <taxon>Chordata</taxon>
        <taxon>Craniata</taxon>
        <taxon>Vertebrata</taxon>
        <taxon>Euteleostomi</taxon>
        <taxon>Mammalia</taxon>
        <taxon>Eutheria</taxon>
        <taxon>Euarchontoglires</taxon>
        <taxon>Primates</taxon>
        <taxon>Haplorrhini</taxon>
        <taxon>Catarrhini</taxon>
        <taxon>Hominidae</taxon>
        <taxon>Homo</taxon>
    </lineage>
</organism>
<dbReference type="EC" id="1.6.3.-"/>
<dbReference type="EMBL" id="AF127763">
    <property type="protein sequence ID" value="AAD38133.1"/>
    <property type="molecule type" value="mRNA"/>
</dbReference>
<dbReference type="EMBL" id="AF166326">
    <property type="protein sequence ID" value="AAF23232.1"/>
    <property type="status" value="ALT_SEQ"/>
    <property type="molecule type" value="mRNA"/>
</dbReference>
<dbReference type="EMBL" id="AF166327">
    <property type="protein sequence ID" value="AAF23233.1"/>
    <property type="molecule type" value="mRNA"/>
</dbReference>
<dbReference type="EMBL" id="AF166328">
    <property type="protein sequence ID" value="AAF23234.1"/>
    <property type="molecule type" value="mRNA"/>
</dbReference>
<dbReference type="EMBL" id="DQ314883">
    <property type="protein sequence ID" value="ABC40742.1"/>
    <property type="molecule type" value="Genomic_DNA"/>
</dbReference>
<dbReference type="EMBL" id="AK292201">
    <property type="protein sequence ID" value="BAF84890.1"/>
    <property type="molecule type" value="mRNA"/>
</dbReference>
<dbReference type="EMBL" id="Z83819">
    <property type="status" value="NOT_ANNOTATED_CDS"/>
    <property type="molecule type" value="Genomic_DNA"/>
</dbReference>
<dbReference type="EMBL" id="CH471115">
    <property type="protein sequence ID" value="EAX02820.1"/>
    <property type="molecule type" value="Genomic_DNA"/>
</dbReference>
<dbReference type="EMBL" id="BC075014">
    <property type="protein sequence ID" value="AAH75014.1"/>
    <property type="molecule type" value="mRNA"/>
</dbReference>
<dbReference type="EMBL" id="BC075015">
    <property type="protein sequence ID" value="AAH75015.1"/>
    <property type="molecule type" value="mRNA"/>
</dbReference>
<dbReference type="CCDS" id="CCDS14474.1">
    <molecule id="Q9Y5S8-1"/>
</dbReference>
<dbReference type="CCDS" id="CCDS14475.1">
    <molecule id="Q9Y5S8-3"/>
</dbReference>
<dbReference type="RefSeq" id="NP_001258744.1">
    <property type="nucleotide sequence ID" value="NM_001271815.1"/>
</dbReference>
<dbReference type="RefSeq" id="NP_008983.2">
    <molecule id="Q9Y5S8-1"/>
    <property type="nucleotide sequence ID" value="NM_007052.5"/>
</dbReference>
<dbReference type="RefSeq" id="NP_039249.1">
    <molecule id="Q9Y5S8-3"/>
    <property type="nucleotide sequence ID" value="NM_013955.3"/>
</dbReference>
<dbReference type="SMR" id="Q9Y5S8"/>
<dbReference type="BioGRID" id="117966">
    <property type="interactions" value="12"/>
</dbReference>
<dbReference type="CORUM" id="Q9Y5S8"/>
<dbReference type="DIP" id="DIP-60457N"/>
<dbReference type="FunCoup" id="Q9Y5S8">
    <property type="interactions" value="16"/>
</dbReference>
<dbReference type="IntAct" id="Q9Y5S8">
    <property type="interactions" value="6"/>
</dbReference>
<dbReference type="STRING" id="9606.ENSP00000362057"/>
<dbReference type="BindingDB" id="Q9Y5S8"/>
<dbReference type="ChEMBL" id="CHEMBL1287628"/>
<dbReference type="DrugBank" id="DB09140">
    <property type="generic name" value="Oxygen"/>
</dbReference>
<dbReference type="GuidetoPHARMACOLOGY" id="3001"/>
<dbReference type="PeroxiBase" id="5410">
    <property type="entry name" value="HsNOx01"/>
</dbReference>
<dbReference type="TCDB" id="5.B.1.1.3">
    <property type="family name" value="the phagocyte (gp91(phox)) nadph oxidase family"/>
</dbReference>
<dbReference type="GlyCosmos" id="Q9Y5S8">
    <property type="glycosylation" value="2 sites, No reported glycans"/>
</dbReference>
<dbReference type="GlyGen" id="Q9Y5S8">
    <property type="glycosylation" value="3 sites, 1 O-linked glycan (1 site)"/>
</dbReference>
<dbReference type="iPTMnet" id="Q9Y5S8"/>
<dbReference type="PhosphoSitePlus" id="Q9Y5S8"/>
<dbReference type="BioMuta" id="NOX1"/>
<dbReference type="DMDM" id="8134597"/>
<dbReference type="jPOST" id="Q9Y5S8"/>
<dbReference type="MassIVE" id="Q9Y5S8"/>
<dbReference type="PaxDb" id="9606-ENSP00000362057"/>
<dbReference type="PeptideAtlas" id="Q9Y5S8"/>
<dbReference type="ProteomicsDB" id="86491">
    <molecule id="Q9Y5S8-1"/>
</dbReference>
<dbReference type="ProteomicsDB" id="86493">
    <molecule id="Q9Y5S8-3"/>
</dbReference>
<dbReference type="Antibodypedia" id="28538">
    <property type="antibodies" value="348 antibodies from 33 providers"/>
</dbReference>
<dbReference type="DNASU" id="27035"/>
<dbReference type="Ensembl" id="ENST00000217885.5">
    <molecule id="Q9Y5S8-3"/>
    <property type="protein sequence ID" value="ENSP00000217885.5"/>
    <property type="gene ID" value="ENSG00000007952.18"/>
</dbReference>
<dbReference type="Ensembl" id="ENST00000372966.8">
    <molecule id="Q9Y5S8-1"/>
    <property type="protein sequence ID" value="ENSP00000362057.3"/>
    <property type="gene ID" value="ENSG00000007952.18"/>
</dbReference>
<dbReference type="GeneID" id="27035"/>
<dbReference type="KEGG" id="hsa:27035"/>
<dbReference type="MANE-Select" id="ENST00000372966.8">
    <property type="protein sequence ID" value="ENSP00000362057.3"/>
    <property type="RefSeq nucleotide sequence ID" value="NM_007052.5"/>
    <property type="RefSeq protein sequence ID" value="NP_008983.2"/>
</dbReference>
<dbReference type="UCSC" id="uc004egj.3">
    <molecule id="Q9Y5S8-1"/>
    <property type="organism name" value="human"/>
</dbReference>
<dbReference type="AGR" id="HGNC:7889"/>
<dbReference type="CTD" id="27035"/>
<dbReference type="DisGeNET" id="27035"/>
<dbReference type="GeneCards" id="NOX1"/>
<dbReference type="HGNC" id="HGNC:7889">
    <property type="gene designation" value="NOX1"/>
</dbReference>
<dbReference type="HPA" id="ENSG00000007952">
    <property type="expression patterns" value="Tissue enriched (intestine)"/>
</dbReference>
<dbReference type="MalaCards" id="NOX1"/>
<dbReference type="MIM" id="300225">
    <property type="type" value="gene"/>
</dbReference>
<dbReference type="neXtProt" id="NX_Q9Y5S8"/>
<dbReference type="OpenTargets" id="ENSG00000007952"/>
<dbReference type="PharmGKB" id="PA31690"/>
<dbReference type="VEuPathDB" id="HostDB:ENSG00000007952"/>
<dbReference type="eggNOG" id="KOG0039">
    <property type="taxonomic scope" value="Eukaryota"/>
</dbReference>
<dbReference type="GeneTree" id="ENSGT00940000161632"/>
<dbReference type="HOGENOM" id="CLU_005646_3_1_1"/>
<dbReference type="InParanoid" id="Q9Y5S8"/>
<dbReference type="OMA" id="CMEVGQY"/>
<dbReference type="OrthoDB" id="167398at2759"/>
<dbReference type="PAN-GO" id="Q9Y5S8">
    <property type="GO annotations" value="5 GO annotations based on evolutionary models"/>
</dbReference>
<dbReference type="PhylomeDB" id="Q9Y5S8"/>
<dbReference type="TreeFam" id="TF105354"/>
<dbReference type="PathwayCommons" id="Q9Y5S8"/>
<dbReference type="Reactome" id="R-HSA-5668599">
    <property type="pathway name" value="RHO GTPases Activate NADPH Oxidases"/>
</dbReference>
<dbReference type="Reactome" id="R-HSA-9013149">
    <property type="pathway name" value="RAC1 GTPase cycle"/>
</dbReference>
<dbReference type="Reactome" id="R-HSA-9013423">
    <property type="pathway name" value="RAC3 GTPase cycle"/>
</dbReference>
<dbReference type="Reactome" id="R-HSA-9673324">
    <property type="pathway name" value="WNT5:FZD7-mediated leishmania damping"/>
</dbReference>
<dbReference type="SignaLink" id="Q9Y5S8"/>
<dbReference type="SIGNOR" id="Q9Y5S8"/>
<dbReference type="BioGRID-ORCS" id="27035">
    <property type="hits" value="9 hits in 770 CRISPR screens"/>
</dbReference>
<dbReference type="ChiTaRS" id="NOX1">
    <property type="organism name" value="human"/>
</dbReference>
<dbReference type="GeneWiki" id="NOX1"/>
<dbReference type="GenomeRNAi" id="27035"/>
<dbReference type="Pharos" id="Q9Y5S8">
    <property type="development level" value="Tchem"/>
</dbReference>
<dbReference type="PRO" id="PR:Q9Y5S8"/>
<dbReference type="Proteomes" id="UP000005640">
    <property type="component" value="Chromosome X"/>
</dbReference>
<dbReference type="RNAct" id="Q9Y5S8">
    <property type="molecule type" value="protein"/>
</dbReference>
<dbReference type="Bgee" id="ENSG00000007952">
    <property type="expression patterns" value="Expressed in rectum and 126 other cell types or tissues"/>
</dbReference>
<dbReference type="ExpressionAtlas" id="Q9Y5S8">
    <property type="expression patterns" value="baseline and differential"/>
</dbReference>
<dbReference type="GO" id="GO:0070161">
    <property type="term" value="C:anchoring junction"/>
    <property type="evidence" value="ECO:0007669"/>
    <property type="project" value="UniProtKB-KW"/>
</dbReference>
<dbReference type="GO" id="GO:0042995">
    <property type="term" value="C:cell projection"/>
    <property type="evidence" value="ECO:0007669"/>
    <property type="project" value="UniProtKB-SubCell"/>
</dbReference>
<dbReference type="GO" id="GO:0005769">
    <property type="term" value="C:early endosome"/>
    <property type="evidence" value="ECO:0000314"/>
    <property type="project" value="BHF-UCL"/>
</dbReference>
<dbReference type="GO" id="GO:0043020">
    <property type="term" value="C:NADPH oxidase complex"/>
    <property type="evidence" value="ECO:0000314"/>
    <property type="project" value="BHF-UCL"/>
</dbReference>
<dbReference type="GO" id="GO:0005886">
    <property type="term" value="C:plasma membrane"/>
    <property type="evidence" value="ECO:0000314"/>
    <property type="project" value="UniProtKB"/>
</dbReference>
<dbReference type="GO" id="GO:0046872">
    <property type="term" value="F:metal ion binding"/>
    <property type="evidence" value="ECO:0007669"/>
    <property type="project" value="UniProtKB-KW"/>
</dbReference>
<dbReference type="GO" id="GO:0050661">
    <property type="term" value="F:NADP binding"/>
    <property type="evidence" value="ECO:0000305"/>
    <property type="project" value="BHF-UCL"/>
</dbReference>
<dbReference type="GO" id="GO:0031267">
    <property type="term" value="F:small GTPase binding"/>
    <property type="evidence" value="ECO:0000353"/>
    <property type="project" value="BHF-UCL"/>
</dbReference>
<dbReference type="GO" id="GO:0016175">
    <property type="term" value="F:superoxide-generating NAD(P)H oxidase activity"/>
    <property type="evidence" value="ECO:0000314"/>
    <property type="project" value="UniProtKB"/>
</dbReference>
<dbReference type="GO" id="GO:0106292">
    <property type="term" value="F:superoxide-generating NADPH oxidase activity"/>
    <property type="evidence" value="ECO:0007669"/>
    <property type="project" value="RHEA"/>
</dbReference>
<dbReference type="GO" id="GO:0001525">
    <property type="term" value="P:angiogenesis"/>
    <property type="evidence" value="ECO:0000315"/>
    <property type="project" value="BHF-UCL"/>
</dbReference>
<dbReference type="GO" id="GO:0016477">
    <property type="term" value="P:cell migration"/>
    <property type="evidence" value="ECO:0000315"/>
    <property type="project" value="BHF-UCL"/>
</dbReference>
<dbReference type="GO" id="GO:0071455">
    <property type="term" value="P:cellular response to hyperoxia"/>
    <property type="evidence" value="ECO:0007669"/>
    <property type="project" value="Ensembl"/>
</dbReference>
<dbReference type="GO" id="GO:0006952">
    <property type="term" value="P:defense response"/>
    <property type="evidence" value="ECO:0000318"/>
    <property type="project" value="GO_Central"/>
</dbReference>
<dbReference type="GO" id="GO:0030198">
    <property type="term" value="P:extracellular matrix organization"/>
    <property type="evidence" value="ECO:0007669"/>
    <property type="project" value="Ensembl"/>
</dbReference>
<dbReference type="GO" id="GO:0042743">
    <property type="term" value="P:hydrogen peroxide metabolic process"/>
    <property type="evidence" value="ECO:0000314"/>
    <property type="project" value="BHF-UCL"/>
</dbReference>
<dbReference type="GO" id="GO:0006954">
    <property type="term" value="P:inflammatory response"/>
    <property type="evidence" value="ECO:0000304"/>
    <property type="project" value="BHF-UCL"/>
</dbReference>
<dbReference type="GO" id="GO:0008631">
    <property type="term" value="P:intrinsic apoptotic signaling pathway in response to oxidative stress"/>
    <property type="evidence" value="ECO:0007669"/>
    <property type="project" value="Ensembl"/>
</dbReference>
<dbReference type="GO" id="GO:0007254">
    <property type="term" value="P:JNK cascade"/>
    <property type="evidence" value="ECO:0007669"/>
    <property type="project" value="Ensembl"/>
</dbReference>
<dbReference type="GO" id="GO:0006739">
    <property type="term" value="P:NADP metabolic process"/>
    <property type="evidence" value="ECO:0000305"/>
    <property type="project" value="BHF-UCL"/>
</dbReference>
<dbReference type="GO" id="GO:0072592">
    <property type="term" value="P:oxygen metabolic process"/>
    <property type="evidence" value="ECO:0007669"/>
    <property type="project" value="Ensembl"/>
</dbReference>
<dbReference type="GO" id="GO:0008284">
    <property type="term" value="P:positive regulation of cell population proliferation"/>
    <property type="evidence" value="ECO:0000314"/>
    <property type="project" value="BHF-UCL"/>
</dbReference>
<dbReference type="GO" id="GO:0045726">
    <property type="term" value="P:positive regulation of integrin biosynthetic process"/>
    <property type="evidence" value="ECO:0000315"/>
    <property type="project" value="BHF-UCL"/>
</dbReference>
<dbReference type="GO" id="GO:0046330">
    <property type="term" value="P:positive regulation of JNK cascade"/>
    <property type="evidence" value="ECO:0007669"/>
    <property type="project" value="Ensembl"/>
</dbReference>
<dbReference type="GO" id="GO:1902177">
    <property type="term" value="P:positive regulation of oxidative stress-induced intrinsic apoptotic signaling pathway"/>
    <property type="evidence" value="ECO:0007669"/>
    <property type="project" value="Ensembl"/>
</dbReference>
<dbReference type="GO" id="GO:0048661">
    <property type="term" value="P:positive regulation of smooth muscle cell proliferation"/>
    <property type="evidence" value="ECO:0000250"/>
    <property type="project" value="BHF-UCL"/>
</dbReference>
<dbReference type="GO" id="GO:0010575">
    <property type="term" value="P:positive regulation of vascular endothelial growth factor production"/>
    <property type="evidence" value="ECO:0000270"/>
    <property type="project" value="BHF-UCL"/>
</dbReference>
<dbReference type="GO" id="GO:0008217">
    <property type="term" value="P:regulation of blood pressure"/>
    <property type="evidence" value="ECO:0000304"/>
    <property type="project" value="BHF-UCL"/>
</dbReference>
<dbReference type="GO" id="GO:0003081">
    <property type="term" value="P:regulation of systemic arterial blood pressure by renin-angiotensin"/>
    <property type="evidence" value="ECO:0007669"/>
    <property type="project" value="Ensembl"/>
</dbReference>
<dbReference type="GO" id="GO:0045730">
    <property type="term" value="P:respiratory burst"/>
    <property type="evidence" value="ECO:0000304"/>
    <property type="project" value="BHF-UCL"/>
</dbReference>
<dbReference type="GO" id="GO:0007165">
    <property type="term" value="P:signal transduction"/>
    <property type="evidence" value="ECO:0000304"/>
    <property type="project" value="BHF-UCL"/>
</dbReference>
<dbReference type="GO" id="GO:0042554">
    <property type="term" value="P:superoxide anion generation"/>
    <property type="evidence" value="ECO:0000314"/>
    <property type="project" value="BHF-UCL"/>
</dbReference>
<dbReference type="CDD" id="cd06186">
    <property type="entry name" value="NOX_Duox_like_FAD_NADP"/>
    <property type="match status" value="1"/>
</dbReference>
<dbReference type="FunFam" id="2.40.30.10:FF:000030">
    <property type="entry name" value="cytochrome b-245 heavy chain"/>
    <property type="match status" value="1"/>
</dbReference>
<dbReference type="FunFam" id="3.40.50.80:FF:000004">
    <property type="entry name" value="NADPH oxidase isoform 2"/>
    <property type="match status" value="1"/>
</dbReference>
<dbReference type="Gene3D" id="3.40.50.80">
    <property type="entry name" value="Nucleotide-binding domain of ferredoxin-NADP reductase (FNR) module"/>
    <property type="match status" value="1"/>
</dbReference>
<dbReference type="Gene3D" id="2.40.30.10">
    <property type="entry name" value="Translation factors"/>
    <property type="match status" value="1"/>
</dbReference>
<dbReference type="InterPro" id="IPR000778">
    <property type="entry name" value="Cyt_b245_heavy_chain"/>
</dbReference>
<dbReference type="InterPro" id="IPR013112">
    <property type="entry name" value="FAD-bd_8"/>
</dbReference>
<dbReference type="InterPro" id="IPR017927">
    <property type="entry name" value="FAD-bd_FR_type"/>
</dbReference>
<dbReference type="InterPro" id="IPR013130">
    <property type="entry name" value="Fe3_Rdtase_TM_dom"/>
</dbReference>
<dbReference type="InterPro" id="IPR013121">
    <property type="entry name" value="Fe_red_NAD-bd_6"/>
</dbReference>
<dbReference type="InterPro" id="IPR039261">
    <property type="entry name" value="FNR_nucleotide-bd"/>
</dbReference>
<dbReference type="InterPro" id="IPR050369">
    <property type="entry name" value="RBOH/FRE"/>
</dbReference>
<dbReference type="InterPro" id="IPR017938">
    <property type="entry name" value="Riboflavin_synthase-like_b-brl"/>
</dbReference>
<dbReference type="PANTHER" id="PTHR11972">
    <property type="entry name" value="NADPH OXIDASE"/>
    <property type="match status" value="1"/>
</dbReference>
<dbReference type="PANTHER" id="PTHR11972:SF71">
    <property type="entry name" value="NADPH OXIDASE 1"/>
    <property type="match status" value="1"/>
</dbReference>
<dbReference type="Pfam" id="PF08022">
    <property type="entry name" value="FAD_binding_8"/>
    <property type="match status" value="1"/>
</dbReference>
<dbReference type="Pfam" id="PF01794">
    <property type="entry name" value="Ferric_reduct"/>
    <property type="match status" value="1"/>
</dbReference>
<dbReference type="Pfam" id="PF08030">
    <property type="entry name" value="NAD_binding_6"/>
    <property type="match status" value="1"/>
</dbReference>
<dbReference type="PRINTS" id="PR00466">
    <property type="entry name" value="GP91PHOX"/>
</dbReference>
<dbReference type="SFLD" id="SFLDS00052">
    <property type="entry name" value="Ferric_Reductase_Domain"/>
    <property type="match status" value="1"/>
</dbReference>
<dbReference type="SFLD" id="SFLDG01168">
    <property type="entry name" value="Ferric_reductase_subgroup_(FRE"/>
    <property type="match status" value="1"/>
</dbReference>
<dbReference type="SUPFAM" id="SSF52343">
    <property type="entry name" value="Ferredoxin reductase-like, C-terminal NADP-linked domain"/>
    <property type="match status" value="1"/>
</dbReference>
<dbReference type="SUPFAM" id="SSF63380">
    <property type="entry name" value="Riboflavin synthase domain-like"/>
    <property type="match status" value="1"/>
</dbReference>
<dbReference type="PROSITE" id="PS51384">
    <property type="entry name" value="FAD_FR"/>
    <property type="match status" value="1"/>
</dbReference>
<accession>Q9Y5S8</accession>
<accession>A8K836</accession>
<accession>O95691</accession>
<accession>Q2PP02</accession>
<protein>
    <recommendedName>
        <fullName>NADPH oxidase 1</fullName>
        <shortName>NOX-1</shortName>
        <ecNumber>1.6.3.-</ecNumber>
    </recommendedName>
    <alternativeName>
        <fullName>Mitogenic oxidase 1</fullName>
        <shortName>MOX-1</shortName>
    </alternativeName>
    <alternativeName>
        <fullName>NADH/NADPH mitogenic oxidase subunit P65-MOX</fullName>
    </alternativeName>
    <alternativeName>
        <fullName>NOH-1</fullName>
    </alternativeName>
</protein>
<reference key="1">
    <citation type="journal article" date="1999" name="Nature">
        <title>Cell transformation by the superoxide-generating oxidase Mox1.</title>
        <authorList>
            <person name="Suh Y.-A."/>
            <person name="Arnold R.S."/>
            <person name="Lassegue B."/>
            <person name="Shi J."/>
            <person name="Xu X."/>
            <person name="Sorescu D."/>
            <person name="Chung A.B."/>
            <person name="Griendling K.K."/>
            <person name="Lambeth J.D."/>
        </authorList>
    </citation>
    <scope>NUCLEOTIDE SEQUENCE [MRNA] (ISOFORM NOH-1L)</scope>
    <scope>FUNCTION (ISOFORM NOH-1L)</scope>
    <scope>CATALYTIC ACTIVITY (ISOFORM NOH-1L)</scope>
    <scope>TISSUE SPECIFICITY (ISOFORM NOH-1L)</scope>
    <source>
        <tissue>Colon epithelium</tissue>
    </source>
</reference>
<reference key="2">
    <citation type="journal article" date="2000" name="Science">
        <title>A mammalian H+ channel, generated through alternative splicing of the NADPH oxidase homolog NOH-1.</title>
        <authorList>
            <person name="Banfi B."/>
            <person name="Maturana A."/>
            <person name="Jaconi S."/>
            <person name="Arnaudeau S."/>
            <person name="Laforge T."/>
            <person name="Sinha B."/>
            <person name="Ligeti E."/>
            <person name="Demaurex N."/>
            <person name="Krause K.-H."/>
        </authorList>
    </citation>
    <scope>NUCLEOTIDE SEQUENCE [MRNA] (ISOFORMS NOH-1L AND NOH-1LV)</scope>
    <scope>TISSUE SPECIFICITY (ISOFORMS NOH-1L)</scope>
</reference>
<reference key="3">
    <citation type="journal article" date="2005" name="Science">
        <authorList>
            <person name="Banfi B."/>
            <person name="Maturana A."/>
            <person name="Jaconi S."/>
            <person name="Arnaudeau S."/>
            <person name="Laforge T."/>
            <person name="Sinha B."/>
            <person name="Ligeti E."/>
            <person name="Demaurex N."/>
            <person name="Krause K.-H."/>
        </authorList>
    </citation>
    <scope>ERRATUM OF PUBMED:10615049</scope>
</reference>
<reference key="4">
    <citation type="submission" date="2005-12" db="EMBL/GenBank/DDBJ databases">
        <authorList>
            <consortium name="NHLBI resequencing and genotyping service (RS&amp;G)"/>
        </authorList>
    </citation>
    <scope>NUCLEOTIDE SEQUENCE [GENOMIC DNA]</scope>
</reference>
<reference key="5">
    <citation type="journal article" date="2004" name="Nat. Genet.">
        <title>Complete sequencing and characterization of 21,243 full-length human cDNAs.</title>
        <authorList>
            <person name="Ota T."/>
            <person name="Suzuki Y."/>
            <person name="Nishikawa T."/>
            <person name="Otsuki T."/>
            <person name="Sugiyama T."/>
            <person name="Irie R."/>
            <person name="Wakamatsu A."/>
            <person name="Hayashi K."/>
            <person name="Sato H."/>
            <person name="Nagai K."/>
            <person name="Kimura K."/>
            <person name="Makita H."/>
            <person name="Sekine M."/>
            <person name="Obayashi M."/>
            <person name="Nishi T."/>
            <person name="Shibahara T."/>
            <person name="Tanaka T."/>
            <person name="Ishii S."/>
            <person name="Yamamoto J."/>
            <person name="Saito K."/>
            <person name="Kawai Y."/>
            <person name="Isono Y."/>
            <person name="Nakamura Y."/>
            <person name="Nagahari K."/>
            <person name="Murakami K."/>
            <person name="Yasuda T."/>
            <person name="Iwayanagi T."/>
            <person name="Wagatsuma M."/>
            <person name="Shiratori A."/>
            <person name="Sudo H."/>
            <person name="Hosoiri T."/>
            <person name="Kaku Y."/>
            <person name="Kodaira H."/>
            <person name="Kondo H."/>
            <person name="Sugawara M."/>
            <person name="Takahashi M."/>
            <person name="Kanda K."/>
            <person name="Yokoi T."/>
            <person name="Furuya T."/>
            <person name="Kikkawa E."/>
            <person name="Omura Y."/>
            <person name="Abe K."/>
            <person name="Kamihara K."/>
            <person name="Katsuta N."/>
            <person name="Sato K."/>
            <person name="Tanikawa M."/>
            <person name="Yamazaki M."/>
            <person name="Ninomiya K."/>
            <person name="Ishibashi T."/>
            <person name="Yamashita H."/>
            <person name="Murakawa K."/>
            <person name="Fujimori K."/>
            <person name="Tanai H."/>
            <person name="Kimata M."/>
            <person name="Watanabe M."/>
            <person name="Hiraoka S."/>
            <person name="Chiba Y."/>
            <person name="Ishida S."/>
            <person name="Ono Y."/>
            <person name="Takiguchi S."/>
            <person name="Watanabe S."/>
            <person name="Yosida M."/>
            <person name="Hotuta T."/>
            <person name="Kusano J."/>
            <person name="Kanehori K."/>
            <person name="Takahashi-Fujii A."/>
            <person name="Hara H."/>
            <person name="Tanase T.-O."/>
            <person name="Nomura Y."/>
            <person name="Togiya S."/>
            <person name="Komai F."/>
            <person name="Hara R."/>
            <person name="Takeuchi K."/>
            <person name="Arita M."/>
            <person name="Imose N."/>
            <person name="Musashino K."/>
            <person name="Yuuki H."/>
            <person name="Oshima A."/>
            <person name="Sasaki N."/>
            <person name="Aotsuka S."/>
            <person name="Yoshikawa Y."/>
            <person name="Matsunawa H."/>
            <person name="Ichihara T."/>
            <person name="Shiohata N."/>
            <person name="Sano S."/>
            <person name="Moriya S."/>
            <person name="Momiyama H."/>
            <person name="Satoh N."/>
            <person name="Takami S."/>
            <person name="Terashima Y."/>
            <person name="Suzuki O."/>
            <person name="Nakagawa S."/>
            <person name="Senoh A."/>
            <person name="Mizoguchi H."/>
            <person name="Goto Y."/>
            <person name="Shimizu F."/>
            <person name="Wakebe H."/>
            <person name="Hishigaki H."/>
            <person name="Watanabe T."/>
            <person name="Sugiyama A."/>
            <person name="Takemoto M."/>
            <person name="Kawakami B."/>
            <person name="Yamazaki M."/>
            <person name="Watanabe K."/>
            <person name="Kumagai A."/>
            <person name="Itakura S."/>
            <person name="Fukuzumi Y."/>
            <person name="Fujimori Y."/>
            <person name="Komiyama M."/>
            <person name="Tashiro H."/>
            <person name="Tanigami A."/>
            <person name="Fujiwara T."/>
            <person name="Ono T."/>
            <person name="Yamada K."/>
            <person name="Fujii Y."/>
            <person name="Ozaki K."/>
            <person name="Hirao M."/>
            <person name="Ohmori Y."/>
            <person name="Kawabata A."/>
            <person name="Hikiji T."/>
            <person name="Kobatake N."/>
            <person name="Inagaki H."/>
            <person name="Ikema Y."/>
            <person name="Okamoto S."/>
            <person name="Okitani R."/>
            <person name="Kawakami T."/>
            <person name="Noguchi S."/>
            <person name="Itoh T."/>
            <person name="Shigeta K."/>
            <person name="Senba T."/>
            <person name="Matsumura K."/>
            <person name="Nakajima Y."/>
            <person name="Mizuno T."/>
            <person name="Morinaga M."/>
            <person name="Sasaki M."/>
            <person name="Togashi T."/>
            <person name="Oyama M."/>
            <person name="Hata H."/>
            <person name="Watanabe M."/>
            <person name="Komatsu T."/>
            <person name="Mizushima-Sugano J."/>
            <person name="Satoh T."/>
            <person name="Shirai Y."/>
            <person name="Takahashi Y."/>
            <person name="Nakagawa K."/>
            <person name="Okumura K."/>
            <person name="Nagase T."/>
            <person name="Nomura N."/>
            <person name="Kikuchi H."/>
            <person name="Masuho Y."/>
            <person name="Yamashita R."/>
            <person name="Nakai K."/>
            <person name="Yada T."/>
            <person name="Nakamura Y."/>
            <person name="Ohara O."/>
            <person name="Isogai T."/>
            <person name="Sugano S."/>
        </authorList>
    </citation>
    <scope>NUCLEOTIDE SEQUENCE [LARGE SCALE MRNA] (ISOFORM NOH-1L)</scope>
    <source>
        <tissue>Colon</tissue>
    </source>
</reference>
<reference key="6">
    <citation type="journal article" date="2005" name="Nature">
        <title>The DNA sequence of the human X chromosome.</title>
        <authorList>
            <person name="Ross M.T."/>
            <person name="Grafham D.V."/>
            <person name="Coffey A.J."/>
            <person name="Scherer S."/>
            <person name="McLay K."/>
            <person name="Muzny D."/>
            <person name="Platzer M."/>
            <person name="Howell G.R."/>
            <person name="Burrows C."/>
            <person name="Bird C.P."/>
            <person name="Frankish A."/>
            <person name="Lovell F.L."/>
            <person name="Howe K.L."/>
            <person name="Ashurst J.L."/>
            <person name="Fulton R.S."/>
            <person name="Sudbrak R."/>
            <person name="Wen G."/>
            <person name="Jones M.C."/>
            <person name="Hurles M.E."/>
            <person name="Andrews T.D."/>
            <person name="Scott C.E."/>
            <person name="Searle S."/>
            <person name="Ramser J."/>
            <person name="Whittaker A."/>
            <person name="Deadman R."/>
            <person name="Carter N.P."/>
            <person name="Hunt S.E."/>
            <person name="Chen R."/>
            <person name="Cree A."/>
            <person name="Gunaratne P."/>
            <person name="Havlak P."/>
            <person name="Hodgson A."/>
            <person name="Metzker M.L."/>
            <person name="Richards S."/>
            <person name="Scott G."/>
            <person name="Steffen D."/>
            <person name="Sodergren E."/>
            <person name="Wheeler D.A."/>
            <person name="Worley K.C."/>
            <person name="Ainscough R."/>
            <person name="Ambrose K.D."/>
            <person name="Ansari-Lari M.A."/>
            <person name="Aradhya S."/>
            <person name="Ashwell R.I."/>
            <person name="Babbage A.K."/>
            <person name="Bagguley C.L."/>
            <person name="Ballabio A."/>
            <person name="Banerjee R."/>
            <person name="Barker G.E."/>
            <person name="Barlow K.F."/>
            <person name="Barrett I.P."/>
            <person name="Bates K.N."/>
            <person name="Beare D.M."/>
            <person name="Beasley H."/>
            <person name="Beasley O."/>
            <person name="Beck A."/>
            <person name="Bethel G."/>
            <person name="Blechschmidt K."/>
            <person name="Brady N."/>
            <person name="Bray-Allen S."/>
            <person name="Bridgeman A.M."/>
            <person name="Brown A.J."/>
            <person name="Brown M.J."/>
            <person name="Bonnin D."/>
            <person name="Bruford E.A."/>
            <person name="Buhay C."/>
            <person name="Burch P."/>
            <person name="Burford D."/>
            <person name="Burgess J."/>
            <person name="Burrill W."/>
            <person name="Burton J."/>
            <person name="Bye J.M."/>
            <person name="Carder C."/>
            <person name="Carrel L."/>
            <person name="Chako J."/>
            <person name="Chapman J.C."/>
            <person name="Chavez D."/>
            <person name="Chen E."/>
            <person name="Chen G."/>
            <person name="Chen Y."/>
            <person name="Chen Z."/>
            <person name="Chinault C."/>
            <person name="Ciccodicola A."/>
            <person name="Clark S.Y."/>
            <person name="Clarke G."/>
            <person name="Clee C.M."/>
            <person name="Clegg S."/>
            <person name="Clerc-Blankenburg K."/>
            <person name="Clifford K."/>
            <person name="Cobley V."/>
            <person name="Cole C.G."/>
            <person name="Conquer J.S."/>
            <person name="Corby N."/>
            <person name="Connor R.E."/>
            <person name="David R."/>
            <person name="Davies J."/>
            <person name="Davis C."/>
            <person name="Davis J."/>
            <person name="Delgado O."/>
            <person name="Deshazo D."/>
            <person name="Dhami P."/>
            <person name="Ding Y."/>
            <person name="Dinh H."/>
            <person name="Dodsworth S."/>
            <person name="Draper H."/>
            <person name="Dugan-Rocha S."/>
            <person name="Dunham A."/>
            <person name="Dunn M."/>
            <person name="Durbin K.J."/>
            <person name="Dutta I."/>
            <person name="Eades T."/>
            <person name="Ellwood M."/>
            <person name="Emery-Cohen A."/>
            <person name="Errington H."/>
            <person name="Evans K.L."/>
            <person name="Faulkner L."/>
            <person name="Francis F."/>
            <person name="Frankland J."/>
            <person name="Fraser A.E."/>
            <person name="Galgoczy P."/>
            <person name="Gilbert J."/>
            <person name="Gill R."/>
            <person name="Gloeckner G."/>
            <person name="Gregory S.G."/>
            <person name="Gribble S."/>
            <person name="Griffiths C."/>
            <person name="Grocock R."/>
            <person name="Gu Y."/>
            <person name="Gwilliam R."/>
            <person name="Hamilton C."/>
            <person name="Hart E.A."/>
            <person name="Hawes A."/>
            <person name="Heath P.D."/>
            <person name="Heitmann K."/>
            <person name="Hennig S."/>
            <person name="Hernandez J."/>
            <person name="Hinzmann B."/>
            <person name="Ho S."/>
            <person name="Hoffs M."/>
            <person name="Howden P.J."/>
            <person name="Huckle E.J."/>
            <person name="Hume J."/>
            <person name="Hunt P.J."/>
            <person name="Hunt A.R."/>
            <person name="Isherwood J."/>
            <person name="Jacob L."/>
            <person name="Johnson D."/>
            <person name="Jones S."/>
            <person name="de Jong P.J."/>
            <person name="Joseph S.S."/>
            <person name="Keenan S."/>
            <person name="Kelly S."/>
            <person name="Kershaw J.K."/>
            <person name="Khan Z."/>
            <person name="Kioschis P."/>
            <person name="Klages S."/>
            <person name="Knights A.J."/>
            <person name="Kosiura A."/>
            <person name="Kovar-Smith C."/>
            <person name="Laird G.K."/>
            <person name="Langford C."/>
            <person name="Lawlor S."/>
            <person name="Leversha M."/>
            <person name="Lewis L."/>
            <person name="Liu W."/>
            <person name="Lloyd C."/>
            <person name="Lloyd D.M."/>
            <person name="Loulseged H."/>
            <person name="Loveland J.E."/>
            <person name="Lovell J.D."/>
            <person name="Lozado R."/>
            <person name="Lu J."/>
            <person name="Lyne R."/>
            <person name="Ma J."/>
            <person name="Maheshwari M."/>
            <person name="Matthews L.H."/>
            <person name="McDowall J."/>
            <person name="McLaren S."/>
            <person name="McMurray A."/>
            <person name="Meidl P."/>
            <person name="Meitinger T."/>
            <person name="Milne S."/>
            <person name="Miner G."/>
            <person name="Mistry S.L."/>
            <person name="Morgan M."/>
            <person name="Morris S."/>
            <person name="Mueller I."/>
            <person name="Mullikin J.C."/>
            <person name="Nguyen N."/>
            <person name="Nordsiek G."/>
            <person name="Nyakatura G."/>
            <person name="O'dell C.N."/>
            <person name="Okwuonu G."/>
            <person name="Palmer S."/>
            <person name="Pandian R."/>
            <person name="Parker D."/>
            <person name="Parrish J."/>
            <person name="Pasternak S."/>
            <person name="Patel D."/>
            <person name="Pearce A.V."/>
            <person name="Pearson D.M."/>
            <person name="Pelan S.E."/>
            <person name="Perez L."/>
            <person name="Porter K.M."/>
            <person name="Ramsey Y."/>
            <person name="Reichwald K."/>
            <person name="Rhodes S."/>
            <person name="Ridler K.A."/>
            <person name="Schlessinger D."/>
            <person name="Schueler M.G."/>
            <person name="Sehra H.K."/>
            <person name="Shaw-Smith C."/>
            <person name="Shen H."/>
            <person name="Sheridan E.M."/>
            <person name="Shownkeen R."/>
            <person name="Skuce C.D."/>
            <person name="Smith M.L."/>
            <person name="Sotheran E.C."/>
            <person name="Steingruber H.E."/>
            <person name="Steward C.A."/>
            <person name="Storey R."/>
            <person name="Swann R.M."/>
            <person name="Swarbreck D."/>
            <person name="Tabor P.E."/>
            <person name="Taudien S."/>
            <person name="Taylor T."/>
            <person name="Teague B."/>
            <person name="Thomas K."/>
            <person name="Thorpe A."/>
            <person name="Timms K."/>
            <person name="Tracey A."/>
            <person name="Trevanion S."/>
            <person name="Tromans A.C."/>
            <person name="d'Urso M."/>
            <person name="Verduzco D."/>
            <person name="Villasana D."/>
            <person name="Waldron L."/>
            <person name="Wall M."/>
            <person name="Wang Q."/>
            <person name="Warren J."/>
            <person name="Warry G.L."/>
            <person name="Wei X."/>
            <person name="West A."/>
            <person name="Whitehead S.L."/>
            <person name="Whiteley M.N."/>
            <person name="Wilkinson J.E."/>
            <person name="Willey D.L."/>
            <person name="Williams G."/>
            <person name="Williams L."/>
            <person name="Williamson A."/>
            <person name="Williamson H."/>
            <person name="Wilming L."/>
            <person name="Woodmansey R.L."/>
            <person name="Wray P.W."/>
            <person name="Yen J."/>
            <person name="Zhang J."/>
            <person name="Zhou J."/>
            <person name="Zoghbi H."/>
            <person name="Zorilla S."/>
            <person name="Buck D."/>
            <person name="Reinhardt R."/>
            <person name="Poustka A."/>
            <person name="Rosenthal A."/>
            <person name="Lehrach H."/>
            <person name="Meindl A."/>
            <person name="Minx P.J."/>
            <person name="Hillier L.W."/>
            <person name="Willard H.F."/>
            <person name="Wilson R.K."/>
            <person name="Waterston R.H."/>
            <person name="Rice C.M."/>
            <person name="Vaudin M."/>
            <person name="Coulson A."/>
            <person name="Nelson D.L."/>
            <person name="Weinstock G."/>
            <person name="Sulston J.E."/>
            <person name="Durbin R.M."/>
            <person name="Hubbard T."/>
            <person name="Gibbs R.A."/>
            <person name="Beck S."/>
            <person name="Rogers J."/>
            <person name="Bentley D.R."/>
        </authorList>
    </citation>
    <scope>NUCLEOTIDE SEQUENCE [LARGE SCALE GENOMIC DNA]</scope>
</reference>
<reference key="7">
    <citation type="submission" date="2005-07" db="EMBL/GenBank/DDBJ databases">
        <authorList>
            <person name="Mural R.J."/>
            <person name="Istrail S."/>
            <person name="Sutton G.G."/>
            <person name="Florea L."/>
            <person name="Halpern A.L."/>
            <person name="Mobarry C.M."/>
            <person name="Lippert R."/>
            <person name="Walenz B."/>
            <person name="Shatkay H."/>
            <person name="Dew I."/>
            <person name="Miller J.R."/>
            <person name="Flanigan M.J."/>
            <person name="Edwards N.J."/>
            <person name="Bolanos R."/>
            <person name="Fasulo D."/>
            <person name="Halldorsson B.V."/>
            <person name="Hannenhalli S."/>
            <person name="Turner R."/>
            <person name="Yooseph S."/>
            <person name="Lu F."/>
            <person name="Nusskern D.R."/>
            <person name="Shue B.C."/>
            <person name="Zheng X.H."/>
            <person name="Zhong F."/>
            <person name="Delcher A.L."/>
            <person name="Huson D.H."/>
            <person name="Kravitz S.A."/>
            <person name="Mouchard L."/>
            <person name="Reinert K."/>
            <person name="Remington K.A."/>
            <person name="Clark A.G."/>
            <person name="Waterman M.S."/>
            <person name="Eichler E.E."/>
            <person name="Adams M.D."/>
            <person name="Hunkapiller M.W."/>
            <person name="Myers E.W."/>
            <person name="Venter J.C."/>
        </authorList>
    </citation>
    <scope>NUCLEOTIDE SEQUENCE [LARGE SCALE GENOMIC DNA]</scope>
</reference>
<reference key="8">
    <citation type="journal article" date="2004" name="Genome Res.">
        <title>The status, quality, and expansion of the NIH full-length cDNA project: the Mammalian Gene Collection (MGC).</title>
        <authorList>
            <consortium name="The MGC Project Team"/>
        </authorList>
    </citation>
    <scope>NUCLEOTIDE SEQUENCE [LARGE SCALE MRNA] (ISOFORM NOH-1L)</scope>
</reference>
<reference key="9">
    <citation type="journal article" date="2004" name="J. Biol. Chem.">
        <title>NOXO1, regulation of lipid binding, localization, and activation of Nox1 by the Phox homology (PX) domain.</title>
        <authorList>
            <person name="Cheng G."/>
            <person name="Lambeth J.D."/>
        </authorList>
    </citation>
    <scope>ACTIVITY REGULATION</scope>
    <scope>FUNCTION</scope>
    <scope>CATALYTIC ACTIVITY</scope>
    <scope>SUBCELLULAR LOCATION</scope>
</reference>
<reference key="10">
    <citation type="journal article" date="2006" name="Biochem. Biophys. Res. Commun.">
        <title>Molecular interaction of NADPH oxidase 1 with betaPix and Nox Organizer 1.</title>
        <authorList>
            <person name="Park H.S."/>
            <person name="Park D."/>
            <person name="Bae Y.S."/>
        </authorList>
    </citation>
    <scope>INTERACTION WITH NOXO1 AND ARHGEF7</scope>
    <scope>ACTIVITY REGULATION</scope>
    <scope>FUNCTION</scope>
    <scope>CATALYTIC ACTIVITY</scope>
</reference>
<reference key="11">
    <citation type="journal article" date="2006" name="J. Biol. Chem.">
        <title>Nox1-dependent reactive oxygen generation is regulated by Rac1.</title>
        <authorList>
            <person name="Cheng G."/>
            <person name="Diebold B.A."/>
            <person name="Hughes Y."/>
            <person name="Lambeth J.D."/>
        </authorList>
    </citation>
    <scope>IDENTIFICATION IN A COMPLEX CONTAINING NOX1; NOXO1; NOXA1 AND RAC1</scope>
    <scope>FUNCTION</scope>
    <scope>CATALYTIC ACTIVITY</scope>
    <scope>ACTIVITY REGULATION</scope>
</reference>
<reference key="12">
    <citation type="journal article" date="2009" name="Sci. Signal.">
        <title>Novel p47(phox)-related organizers regulate localized NADPH oxidase 1 (Nox1) activity.</title>
        <authorList>
            <person name="Gianni D."/>
            <person name="Diaz B."/>
            <person name="Taulet N."/>
            <person name="Fowler B."/>
            <person name="Courtneidge S.A."/>
            <person name="Bokoch G.M."/>
        </authorList>
    </citation>
    <scope>SUBCELLULAR LOCATION</scope>
    <scope>FUNCTION</scope>
    <scope>CATALYTIC ACTIVITY</scope>
</reference>
<reference key="13">
    <citation type="journal article" date="2014" name="Biochem. Biophys. Res. Commun.">
        <title>N-Linked glycosylation of the superoxide-producing NADPH oxidase Nox1.</title>
        <authorList>
            <person name="Miyano K."/>
            <person name="Sumimoto H."/>
        </authorList>
    </citation>
    <scope>GLYCOSYLATION AT ASN-162 AND ASN-236</scope>
</reference>
<reference key="14">
    <citation type="journal article" date="2015" name="Cell. Mol. Gastroenterol. Hepatol.">
        <title>Defects in NADPH oxidase genes NOX1 and DUOX2 in very early onset inflammatory bowel disease.</title>
        <authorList>
            <person name="Hayes P."/>
            <person name="Dhillon S."/>
            <person name="O'Neill K."/>
            <person name="Thoeni C."/>
            <person name="Hui K.Y."/>
            <person name="Elkadri A."/>
            <person name="Guo C.H."/>
            <person name="Kovacic L."/>
            <person name="Aviello G."/>
            <person name="Alvarez L.A."/>
            <person name="Griffiths A.M."/>
            <person name="Snapper S.B."/>
            <person name="Brant S.R."/>
            <person name="Doroshow J.H."/>
            <person name="Silverberg M.S."/>
            <person name="Peter I."/>
            <person name="McGovern D.P."/>
            <person name="Cho J."/>
            <person name="Brumell J.H."/>
            <person name="Uhlig H.H."/>
            <person name="Bourke B."/>
            <person name="Muise A.A."/>
            <person name="Knaus U.G."/>
        </authorList>
    </citation>
    <scope>POSSIBLE INVOLVEMENT IN INFLAMMATORY BOWEL DISEASE</scope>
    <scope>VARIANTS SER-330 AND ASN-360</scope>
    <scope>SUBCELLULAR LOCATION</scope>
</reference>
<name>NOX1_HUMAN</name>
<sequence length="564" mass="64871">MGNWVVNHWFSVLFLVVWLGLNVFLFVDAFLKYEKADKYYYTRKILGSTLACARASALCLNFNSTLILLPVCRNLLSFLRGTCSFCSRTLRKQLDHNLTFHKLVAYMICLHTAIHIIAHLFNFDCYSRSRQATDGSLASILSSLSHDEKKGGSWLNPIQSRNTTVEYVTFTSIAGLTGVIMTIALILMVTSATEFIRRSYFEVFWYTHHLFIFYILGLGIHGIGGIVRGQTEESMNESHPRKCAESFEMWDDRDSHCRRPKFEGHPPESWKWILAPVILYICERILRFYRSQQKVVITKVVMHPSKVLELQMNKRGFSMEVGQYIFVNCPSISLLEWHPFTLTSAPEEDFFSIHIRAAGDWTENLIRAFEQQYSPIPRIEVDGPFGTASEDVFQYEVAVLVGAGIGVTPFASILKSIWYKFQCADHNLKTKKIYFYWICRETGAFSWFNNLLTSLEQEMEELGKVGFLNYRLFLTGWDSNIVGHAALNFDKATDIVTGLKQKTSFGRPMWDNEFSTIATSHPKSVVGVFLCGPRTLAKSLRKCCHRYSSLDPRKVQFYFNKENF</sequence>
<feature type="chain" id="PRO_0000210148" description="NADPH oxidase 1">
    <location>
        <begin position="1"/>
        <end position="564"/>
    </location>
</feature>
<feature type="topological domain" description="Cytoplasmic" evidence="2">
    <location>
        <begin position="1"/>
        <end position="9"/>
    </location>
</feature>
<feature type="transmembrane region" description="Helical" evidence="2">
    <location>
        <begin position="10"/>
        <end position="30"/>
    </location>
</feature>
<feature type="topological domain" description="Extracellular" evidence="2">
    <location>
        <begin position="31"/>
        <end position="44"/>
    </location>
</feature>
<feature type="transmembrane region" description="Helical" evidence="2">
    <location>
        <begin position="45"/>
        <end position="72"/>
    </location>
</feature>
<feature type="topological domain" description="Cytoplasmic" evidence="2">
    <location>
        <begin position="73"/>
        <end position="102"/>
    </location>
</feature>
<feature type="transmembrane region" description="Helical" evidence="2">
    <location>
        <begin position="103"/>
        <end position="123"/>
    </location>
</feature>
<feature type="topological domain" description="Extracellular" evidence="2">
    <location>
        <begin position="124"/>
        <end position="168"/>
    </location>
</feature>
<feature type="transmembrane region" description="Helical" evidence="2">
    <location>
        <begin position="169"/>
        <end position="189"/>
    </location>
</feature>
<feature type="topological domain" description="Cytoplasmic" evidence="2">
    <location>
        <begin position="190"/>
        <end position="206"/>
    </location>
</feature>
<feature type="transmembrane region" description="Helical" evidence="2">
    <location>
        <begin position="207"/>
        <end position="227"/>
    </location>
</feature>
<feature type="topological domain" description="Extracellular" evidence="2">
    <location>
        <begin position="228"/>
        <end position="396"/>
    </location>
</feature>
<feature type="transmembrane region" description="Helical" evidence="2">
    <location>
        <begin position="397"/>
        <end position="417"/>
    </location>
</feature>
<feature type="topological domain" description="Cytoplasmic" evidence="2">
    <location>
        <begin position="418"/>
        <end position="564"/>
    </location>
</feature>
<feature type="domain" description="Ferric oxidoreductase">
    <location>
        <begin position="54"/>
        <end position="283"/>
    </location>
</feature>
<feature type="domain" description="FAD-binding FR-type" evidence="3">
    <location>
        <begin position="284"/>
        <end position="391"/>
    </location>
</feature>
<feature type="region of interest" description="Interaction with NOXO1" evidence="7">
    <location>
        <begin position="397"/>
        <end position="536"/>
    </location>
</feature>
<feature type="binding site" description="axial binding residue" evidence="15">
    <location>
        <position position="101"/>
    </location>
    <ligand>
        <name>heme</name>
        <dbReference type="ChEBI" id="CHEBI:30413"/>
    </ligand>
    <ligandPart>
        <name>Fe</name>
        <dbReference type="ChEBI" id="CHEBI:18248"/>
    </ligandPart>
</feature>
<feature type="binding site" description="axial binding residue" evidence="15">
    <location>
        <position position="115"/>
    </location>
    <ligand>
        <name>heme</name>
        <dbReference type="ChEBI" id="CHEBI:30413"/>
    </ligand>
    <ligandPart>
        <name>Fe</name>
        <dbReference type="ChEBI" id="CHEBI:18248"/>
    </ligandPart>
</feature>
<feature type="binding site" description="axial binding residue" evidence="15">
    <location>
        <position position="209"/>
    </location>
    <ligand>
        <name>heme</name>
        <dbReference type="ChEBI" id="CHEBI:30413"/>
    </ligand>
    <ligandPart>
        <name>Fe</name>
        <dbReference type="ChEBI" id="CHEBI:18248"/>
    </ligandPart>
</feature>
<feature type="binding site" description="axial binding residue" evidence="15">
    <location>
        <position position="221"/>
    </location>
    <ligand>
        <name>heme</name>
        <dbReference type="ChEBI" id="CHEBI:30413"/>
    </ligand>
    <ligandPart>
        <name>Fe</name>
        <dbReference type="ChEBI" id="CHEBI:18248"/>
    </ligandPart>
</feature>
<feature type="binding site" evidence="2">
    <location>
        <begin position="338"/>
        <end position="344"/>
    </location>
    <ligand>
        <name>FAD</name>
        <dbReference type="ChEBI" id="CHEBI:57692"/>
    </ligand>
</feature>
<feature type="modified residue" description="Phosphothreonine" evidence="1">
    <location>
        <position position="430"/>
    </location>
</feature>
<feature type="glycosylation site" description="N-linked (GlcNAc...) asparagine" evidence="10">
    <location>
        <position position="162"/>
    </location>
</feature>
<feature type="glycosylation site" description="N-linked (GlcNAc...) asparagine" evidence="10">
    <location>
        <position position="236"/>
    </location>
</feature>
<feature type="splice variant" id="VSP_001579" description="In isoform NOH-1LV." evidence="13">
    <location>
        <begin position="433"/>
        <end position="481"/>
    </location>
</feature>
<feature type="sequence variant" id="VAR_049101" description="In dbSNP:rs2071756.">
    <original>R</original>
    <variation>H</variation>
    <location>
        <position position="315"/>
    </location>
</feature>
<feature type="sequence variant" id="VAR_075548" description="Found in a patient with very early onset inflammatory bowel disease; uncertain significance; no effect on subcellular location; significantly reduced basal and phorbol ester-stimulated ROS generation, which may decrease resistance to infection by enteric pathogens, such as Campylobacter jejuni." evidence="11">
    <original>P</original>
    <variation>S</variation>
    <location>
        <position position="330"/>
    </location>
</feature>
<feature type="sequence variant" id="VAR_061176" description="Found in a patient with very early onset inflammatory bowel disease; uncertain significance; no effect on subcellular location; significantly reduced basal and phorbol ester-stimulated ROS generation, which may decrease resistance to infection by enteric pathogens, such as Campylobacter jejuni; dbSNP:rs34688635." evidence="11">
    <original>D</original>
    <variation>N</variation>
    <location>
        <position position="360"/>
    </location>
</feature>
<feature type="sequence variant" id="VAR_049102" description="In dbSNP:rs35404864.">
    <original>R</original>
    <variation>K</variation>
    <location>
        <position position="378"/>
    </location>
</feature>
<feature type="sequence conflict" description="In Ref. 2; AAD38133." evidence="15" ref="2">
    <original>I</original>
    <variation>V</variation>
    <location>
        <position position="173"/>
    </location>
</feature>
<keyword id="KW-0025">Alternative splicing</keyword>
<keyword id="KW-0965">Cell junction</keyword>
<keyword id="KW-1003">Cell membrane</keyword>
<keyword id="KW-0966">Cell projection</keyword>
<keyword id="KW-0249">Electron transport</keyword>
<keyword id="KW-0274">FAD</keyword>
<keyword id="KW-0285">Flavoprotein</keyword>
<keyword id="KW-0325">Glycoprotein</keyword>
<keyword id="KW-0349">Heme</keyword>
<keyword id="KW-0408">Iron</keyword>
<keyword id="KW-0472">Membrane</keyword>
<keyword id="KW-0479">Metal-binding</keyword>
<keyword id="KW-0521">NADP</keyword>
<keyword id="KW-0560">Oxidoreductase</keyword>
<keyword id="KW-0597">Phosphoprotein</keyword>
<keyword id="KW-1267">Proteomics identification</keyword>
<keyword id="KW-1185">Reference proteome</keyword>
<keyword id="KW-0812">Transmembrane</keyword>
<keyword id="KW-1133">Transmembrane helix</keyword>
<keyword id="KW-0813">Transport</keyword>
<gene>
    <name evidence="16" type="primary">NOX1</name>
    <name type="synonym">MOX1</name>
    <name type="synonym">NOH1</name>
</gene>
<evidence type="ECO:0000250" key="1">
    <source>
        <dbReference type="UniProtKB" id="Q9WV87"/>
    </source>
</evidence>
<evidence type="ECO:0000255" key="2"/>
<evidence type="ECO:0000255" key="3">
    <source>
        <dbReference type="PROSITE-ProRule" id="PRU00716"/>
    </source>
</evidence>
<evidence type="ECO:0000269" key="4">
    <source>
    </source>
</evidence>
<evidence type="ECO:0000269" key="5">
    <source>
    </source>
</evidence>
<evidence type="ECO:0000269" key="6">
    <source>
    </source>
</evidence>
<evidence type="ECO:0000269" key="7">
    <source>
    </source>
</evidence>
<evidence type="ECO:0000269" key="8">
    <source>
    </source>
</evidence>
<evidence type="ECO:0000269" key="9">
    <source>
    </source>
</evidence>
<evidence type="ECO:0000269" key="10">
    <source>
    </source>
</evidence>
<evidence type="ECO:0000269" key="11">
    <source>
    </source>
</evidence>
<evidence type="ECO:0000269" key="12">
    <source ref="3"/>
</evidence>
<evidence type="ECO:0000303" key="13">
    <source>
    </source>
</evidence>
<evidence type="ECO:0000303" key="14">
    <source ref="3"/>
</evidence>
<evidence type="ECO:0000305" key="15"/>
<evidence type="ECO:0000312" key="16">
    <source>
        <dbReference type="HGNC" id="HGNC:7889"/>
    </source>
</evidence>
<comment type="function">
    <text evidence="6 7 8 9">NADPH oxidase that catalyzes the generation of superoxide from molecular oxygen utilizing NADPH as an electron donor.</text>
</comment>
<comment type="function">
    <molecule>Isoform NOH-1L</molecule>
    <text evidence="4">NADPH oxidase that catalyzes the generation of superoxide from molecular oxygen utilizing NADPH as an electron donor.</text>
</comment>
<comment type="catalytic activity">
    <reaction evidence="6 7 8 9">
        <text>NADPH + 2 O2 = 2 superoxide + NADP(+) + H(+)</text>
        <dbReference type="Rhea" id="RHEA:63180"/>
        <dbReference type="ChEBI" id="CHEBI:15378"/>
        <dbReference type="ChEBI" id="CHEBI:15379"/>
        <dbReference type="ChEBI" id="CHEBI:18421"/>
        <dbReference type="ChEBI" id="CHEBI:57783"/>
        <dbReference type="ChEBI" id="CHEBI:58349"/>
    </reaction>
</comment>
<comment type="catalytic activity">
    <molecule>Isoform NOH-1L</molecule>
    <reaction evidence="4">
        <text>NADPH + 2 O2 = 2 superoxide + NADP(+) + H(+)</text>
        <dbReference type="Rhea" id="RHEA:63180"/>
        <dbReference type="ChEBI" id="CHEBI:15378"/>
        <dbReference type="ChEBI" id="CHEBI:15379"/>
        <dbReference type="ChEBI" id="CHEBI:18421"/>
        <dbReference type="ChEBI" id="CHEBI:57783"/>
        <dbReference type="ChEBI" id="CHEBI:58349"/>
    </reaction>
</comment>
<comment type="cofactor">
    <cofactor evidence="15">
        <name>FAD</name>
        <dbReference type="ChEBI" id="CHEBI:57692"/>
    </cofactor>
</comment>
<comment type="activity regulation">
    <text evidence="6 7 8">The oxidase activity is potentiated by NOXA1, NOXO1 and RAC1.</text>
</comment>
<comment type="subunit">
    <text evidence="1 7 8">NOX1, NOXA1, NOXO1, RAC1 and CYBA forms a functional multimeric complex supporting reactive oxygen species (ROS) production (PubMed:16636067). Interacts with NOXO1 (PubMed:16329988). Interacts (via FAD-binding FR-type domain) with ARHGEF7 (via PH domain) (PubMed:16329988). The phosphorylated form at Thr-430 interacts with NOXA1 with greater affinity (By similarity).</text>
</comment>
<comment type="interaction">
    <interactant intactId="EBI-15795558">
        <id>Q9Y5S8</id>
    </interactant>
    <interactant intactId="EBI-18271435">
        <id>Q0VAB0</id>
        <label>TBXA2R</label>
    </interactant>
    <organismsDiffer>false</organismsDiffer>
    <experiments>3</experiments>
</comment>
<comment type="subcellular location">
    <subcellularLocation>
        <location evidence="9">Cell projection</location>
        <location evidence="9">Invadopodium membrane</location>
        <topology evidence="2">Multi-pass membrane protein</topology>
    </subcellularLocation>
    <subcellularLocation>
        <location evidence="6 11">Cell membrane</location>
        <topology evidence="2">Multi-pass membrane protein</topology>
    </subcellularLocation>
</comment>
<comment type="alternative products">
    <event type="alternative splicing"/>
    <isoform>
        <id>Q9Y5S8-1</id>
        <name>NOH-1L</name>
        <sequence type="displayed"/>
    </isoform>
    <isoform>
        <id>Q9Y5S8-3</id>
        <name>NOH-1LV</name>
        <sequence type="described" ref="VSP_001579"/>
    </isoform>
</comment>
<comment type="tissue specificity">
    <molecule>Isoform NOH-1L</molecule>
    <text evidence="4 5">Detected in colon, uterus, prostate, and colon carcinoma, but not in peripheral blood leukocytes.</text>
</comment>
<comment type="PTM">
    <text evidence="1">Phosphorylation at Thr-430 mediated by PKC/PRKBC positively regulates its interaction with NOXA1 and enzyme activity.</text>
</comment>
<comment type="disease">
    <text evidence="11">Defects in NOX1 may play a role in the pathogenesis of very early onset inflammatory bowel disease (VEOIBD), a chronic, relapsing inflammation of the gastrointestinal tract with a complex etiology diagnosed before 6 years of age. VEOIBD is subdivided into Crohn disease and ulcerative colitis phenotypes. Crohn disease may affect any part of the gastrointestinal tract from the mouth to the anus, but the phenotype of children with onset of Crohn disease occurring younger than the age of 10 is predominantly colonic, with a lower risk of ileal disease. Bowel inflammation is transmural and discontinuous; it may contain granulomas or be associated with intestinal or perianal fistulas. In contrast, in ulcerative colitis, the inflammation is continuous and limited to rectal and colonic mucosal layers; fistulas and granulomas are not observed. Both diseases include extraintestinal inflammation of the skin, eyes, or joints.</text>
</comment>
<comment type="caution">
    <text evidence="5 12">An isoform named NOH-1S resulting from alternative splicing was first described as a voltage-gated proton channel that mediates the H(+) currents (PubMed:10615049). However later studies showed that this isoform was an artifact most likely due to a stable loop formation of the NOX1 mRNA (Ref.3).</text>
</comment>
<comment type="sequence caution" evidence="14">
    <conflict type="miscellaneous discrepancy">
        <sequence resource="EMBL-CDS" id="AAF23232"/>
    </conflict>
    <text>Cloning artifact.</text>
</comment>